<keyword id="KW-0007">Acetylation</keyword>
<keyword id="KW-0010">Activator</keyword>
<keyword id="KW-0963">Cytoplasm</keyword>
<keyword id="KW-0238">DNA-binding</keyword>
<keyword id="KW-1017">Isopeptide bond</keyword>
<keyword id="KW-0479">Metal-binding</keyword>
<keyword id="KW-0539">Nucleus</keyword>
<keyword id="KW-0597">Phosphoprotein</keyword>
<keyword id="KW-1185">Reference proteome</keyword>
<keyword id="KW-0678">Repressor</keyword>
<keyword id="KW-0804">Transcription</keyword>
<keyword id="KW-0805">Transcription regulation</keyword>
<keyword id="KW-0832">Ubl conjugation</keyword>
<keyword id="KW-0862">Zinc</keyword>
<keyword id="KW-0863">Zinc-finger</keyword>
<gene>
    <name type="primary">FOXP3</name>
</gene>
<accession>Q6U8D7</accession>
<sequence>MPNPRPGKPSAPSLALGPSPGASPSWRAAPKASDLLGARGPGGIFQGRDLRGGAHASSSSLNPMPPSQLQLPTLPLVMVAPSGARLGPLPHLQALLQDRPHFMHQLSTVDAHARTPVLQVHPLESPAMISLPPPTTATGVFSLKARPGLPPGINVASLEWVSREPALLCTFPNPGAPRKDSTLSAMPQSSYPLLANGVCKWPGCEKVFEEPEDFLKHCQADHLLDEKGRAQCLLQREMVQSLEQQLVLEKEKLSAMQAHLAGKMALTKASSVASSDKGSCCIVAAGSQGSAVPAWSGPREAPDSLFAVRRHLWGSHGNSTFPEFLHNMDYFKFHNMRPPFTYATLIRWAILEAPEKQRTLNEIYHWFTRMFAFFRNHPATWKNAIRHNLSLHKCFVRVESEKGAVWTVDELEFRKKRSQRPSRCSNPTPGP</sequence>
<evidence type="ECO:0000250" key="1">
    <source>
        <dbReference type="UniProtKB" id="Q99JB6"/>
    </source>
</evidence>
<evidence type="ECO:0000250" key="2">
    <source>
        <dbReference type="UniProtKB" id="Q9BZS1"/>
    </source>
</evidence>
<evidence type="ECO:0000255" key="3">
    <source>
        <dbReference type="PROSITE-ProRule" id="PRU00089"/>
    </source>
</evidence>
<evidence type="ECO:0000256" key="4">
    <source>
        <dbReference type="SAM" id="MobiDB-lite"/>
    </source>
</evidence>
<organism>
    <name type="scientific">Macaca fascicularis</name>
    <name type="common">Crab-eating macaque</name>
    <name type="synonym">Cynomolgus monkey</name>
    <dbReference type="NCBI Taxonomy" id="9541"/>
    <lineage>
        <taxon>Eukaryota</taxon>
        <taxon>Metazoa</taxon>
        <taxon>Chordata</taxon>
        <taxon>Craniata</taxon>
        <taxon>Vertebrata</taxon>
        <taxon>Euteleostomi</taxon>
        <taxon>Mammalia</taxon>
        <taxon>Eutheria</taxon>
        <taxon>Euarchontoglires</taxon>
        <taxon>Primates</taxon>
        <taxon>Haplorrhini</taxon>
        <taxon>Catarrhini</taxon>
        <taxon>Cercopithecidae</taxon>
        <taxon>Cercopithecinae</taxon>
        <taxon>Macaca</taxon>
    </lineage>
</organism>
<feature type="chain" id="PRO_0000091887" description="Forkhead box protein P3">
    <location>
        <begin position="1"/>
        <end position="431"/>
    </location>
</feature>
<feature type="chain" id="PRO_0000432433" description="Forkhead box protein P3, C-terminally processed" evidence="1">
    <location>
        <begin position="1"/>
        <end position="417"/>
    </location>
</feature>
<feature type="chain" id="PRO_0000432434" description="Forkhead box protein P3 41 kDa form" evidence="1">
    <location>
        <begin position="52"/>
        <end position="417"/>
    </location>
</feature>
<feature type="propeptide" id="PRO_0000432435" evidence="1">
    <location>
        <begin position="418"/>
        <end position="431"/>
    </location>
</feature>
<feature type="zinc finger region" description="C2H2-type">
    <location>
        <begin position="197"/>
        <end position="222"/>
    </location>
</feature>
<feature type="DNA-binding region" description="Fork-head" evidence="3">
    <location>
        <begin position="337"/>
        <end position="423"/>
    </location>
</feature>
<feature type="region of interest" description="Disordered" evidence="4">
    <location>
        <begin position="1"/>
        <end position="68"/>
    </location>
</feature>
<feature type="region of interest" description="Essential for transcriptional repressor activity and for interaction with KAT5 and HDAC7" evidence="2">
    <location>
        <begin position="106"/>
        <end position="190"/>
    </location>
</feature>
<feature type="region of interest" description="Interaction with IKZF4" evidence="1">
    <location>
        <begin position="149"/>
        <end position="199"/>
    </location>
</feature>
<feature type="region of interest" description="Leucine-zipper">
    <location>
        <begin position="239"/>
        <end position="260"/>
    </location>
</feature>
<feature type="region of interest" description="Interaction with RUNX1" evidence="2">
    <location>
        <begin position="278"/>
        <end position="336"/>
    </location>
</feature>
<feature type="short sequence motif" description="Nuclear export signal" evidence="2">
    <location>
        <begin position="68"/>
        <end position="76"/>
    </location>
</feature>
<feature type="short sequence motif" description="LXXLL motif" evidence="2">
    <location>
        <begin position="92"/>
        <end position="96"/>
    </location>
</feature>
<feature type="short sequence motif" description="Nuclear export signal" evidence="2">
    <location>
        <begin position="239"/>
        <end position="248"/>
    </location>
</feature>
<feature type="short sequence motif" description="Nuclear localization signal" evidence="2">
    <location>
        <begin position="414"/>
        <end position="417"/>
    </location>
</feature>
<feature type="compositionally biased region" description="Low complexity" evidence="4">
    <location>
        <begin position="10"/>
        <end position="25"/>
    </location>
</feature>
<feature type="site" description="Cleavage" evidence="1">
    <location>
        <begin position="51"/>
        <end position="52"/>
    </location>
</feature>
<feature type="site" description="Cleavage; by PCSK1 or PCSK2" evidence="1">
    <location>
        <begin position="417"/>
        <end position="418"/>
    </location>
</feature>
<feature type="modified residue" description="Phosphoserine; by CDK2" evidence="1">
    <location>
        <position position="19"/>
    </location>
</feature>
<feature type="modified residue" description="N6-acetyllysine" evidence="2">
    <location>
        <position position="31"/>
    </location>
</feature>
<feature type="modified residue" description="N6-acetyllysine; alternate" evidence="2">
    <location>
        <position position="263"/>
    </location>
</feature>
<feature type="modified residue" description="N6-acetyllysine; alternate" evidence="2">
    <location>
        <position position="268"/>
    </location>
</feature>
<feature type="modified residue" description="Phosphoserine" evidence="2">
    <location>
        <position position="418"/>
    </location>
</feature>
<feature type="cross-link" description="Glycyl lysine isopeptide (Lys-Gly) (interchain with G-Cter in ubiquitin)" evidence="1">
    <location>
        <position position="250"/>
    </location>
</feature>
<feature type="cross-link" description="Glycyl lysine isopeptide (Lys-Gly) (interchain with G-Cter in ubiquitin)" evidence="1">
    <location>
        <position position="252"/>
    </location>
</feature>
<feature type="cross-link" description="Glycyl lysine isopeptide (Lys-Gly) (interchain with G-Cter in ubiquitin); alternate" evidence="1">
    <location>
        <position position="263"/>
    </location>
</feature>
<feature type="cross-link" description="Glycyl lysine isopeptide (Lys-Gly) (interchain with G-Cter in ubiquitin); alternate" evidence="1">
    <location>
        <position position="268"/>
    </location>
</feature>
<feature type="cross-link" description="Glycyl lysine isopeptide (Lys-Gly) (interchain with G-Cter in ubiquitin)" evidence="1">
    <location>
        <position position="393"/>
    </location>
</feature>
<comment type="function">
    <text evidence="1 2">Transcriptional regulator which is crucial for the development and inhibitory function of regulatory T-cells (Treg). Plays an essential role in maintaining homeostasis of the immune system by allowing the acquisition of full suppressive function and stability of the Treg lineage, and by directly modulating the expansion and function of conventional T-cells. Can act either as a transcriptional repressor or a transcriptional activator depending on its interactions with other transcription factors, histone acetylases and deacetylases. The suppressive activity of Treg involves the coordinate activation of many genes, including CTLA4 and TNFRSF18 by FOXP3 along with repression of genes encoding cytokines such as interleukin-2 (IL2) and interferon-gamma (IFNG). Inhibits cytokine production and T-cell effector function by repressing the activity of two key transcription factors, RELA and NFATC2. Mediates transcriptional repression of IL2 via its association with histone acetylase KAT5 and histone deacetylase HDAC7. Can activate the expression of TNFRSF18, IL2RA and CTLA4 and repress the expression of IL2 and IFNG via its association with transcription factor RUNX1. Inhibits the differentiation of IL17 producing helper T-cells (Th17) by antagonizing RORC function, leading to down-regulation of IL17 expression, favoring Treg development. Inhibits the transcriptional activator activity of RORA (By similarity). Can repress the expression of IL2 and IFNG via its association with transcription factor IKZF4 (By similarity).</text>
</comment>
<comment type="subunit">
    <text evidence="1 2">Homodimer. Dimerization is essential for its transcriptional regulator activity. Interacts with IKZF3. Interacts (via LXXLL motif) with RORA (via AF-2 motif). Interacts with HDAC9 in the absence of T-cell stimulation. Interacts with PPP1CA, PPP1CB, PPP1CG, KAT5, HDAC7, HSPA8, USP7, STUB1, HSPA1A/B, RUNX1, RUNX2, RUNX3, RELA, NFATC2, IKFZ4 and RORC.</text>
</comment>
<comment type="subcellular location">
    <subcellularLocation>
        <location evidence="2 3">Nucleus</location>
    </subcellularLocation>
    <subcellularLocation>
        <location evidence="2">Cytoplasm</location>
    </subcellularLocation>
    <text evidence="1 2">Predominantly expressed in the cytoplasm in activated conventional T-cells whereas predominantly expressed in the nucleus in regulatory T-cells (Treg). The 41 kDa form derived by proteolytic processing is found exclusively in the chromatin fraction of activated Treg cells.</text>
</comment>
<comment type="domain">
    <text evidence="2">The fork-head DNA-binding domain is essential for its dimerization and interaction with NFATC2.</text>
</comment>
<comment type="PTM">
    <text evidence="1 2">Phosphorylation at Ser-418 regulates its transcriptional repressor activity and consequently, regulatory T-cells (Treg) suppressive function. Phosphorylation by CDK2 negatively regulates its transcriptional activity and protein stability.</text>
</comment>
<comment type="PTM">
    <text evidence="2">Polyubiquitinated, leading to its proteasomal degradation in regulatory T-cells (Treg) which is mediated by STUB1 in a HSPA1A/B-dependent manner. Deubiquitinated by USP7 and USP44 leading to increase in protein stability.</text>
</comment>
<comment type="PTM">
    <text evidence="2">Acetylation on lysine residues stabilizes FOXP3 and promotes differentiation of T-cells into induced regulatory T-cells (iTregs) associated with suppressive functions. Acetylation is mediated by a coordinated action of KAT5 and EP300/p300 acetyltransferases: EP300/p300 is required to enhance KAT5 autoacetylation, promoting acetylation of FOXP3 by KAT5. Deacetylated by SIRT1.</text>
</comment>
<comment type="PTM">
    <text evidence="1">Undergoes proteolytic cleavage in activated regulatory T-cells (Treg), and can be cleaved at either the N- or C-terminal site, or at both sites.</text>
</comment>
<name>FOXP3_MACFA</name>
<dbReference type="EMBL" id="AY376065">
    <property type="protein sequence ID" value="AAQ82647.1"/>
    <property type="molecule type" value="mRNA"/>
</dbReference>
<dbReference type="RefSeq" id="XP_005593607.2">
    <property type="nucleotide sequence ID" value="XM_005593550.4"/>
</dbReference>
<dbReference type="SMR" id="Q6U8D7"/>
<dbReference type="STRING" id="9541.ENSMFAP00000033670"/>
<dbReference type="GeneID" id="102120882"/>
<dbReference type="KEGG" id="mcf:102120882"/>
<dbReference type="CTD" id="50943"/>
<dbReference type="eggNOG" id="KOG4385">
    <property type="taxonomic scope" value="Eukaryota"/>
</dbReference>
<dbReference type="Proteomes" id="UP000233100">
    <property type="component" value="Unplaced"/>
</dbReference>
<dbReference type="GO" id="GO:0005737">
    <property type="term" value="C:cytoplasm"/>
    <property type="evidence" value="ECO:0000250"/>
    <property type="project" value="UniProtKB"/>
</dbReference>
<dbReference type="GO" id="GO:0005634">
    <property type="term" value="C:nucleus"/>
    <property type="evidence" value="ECO:0000250"/>
    <property type="project" value="UniProtKB"/>
</dbReference>
<dbReference type="GO" id="GO:0003677">
    <property type="term" value="F:DNA binding"/>
    <property type="evidence" value="ECO:0000250"/>
    <property type="project" value="UniProtKB"/>
</dbReference>
<dbReference type="GO" id="GO:0003700">
    <property type="term" value="F:DNA-binding transcription factor activity"/>
    <property type="evidence" value="ECO:0000250"/>
    <property type="project" value="UniProtKB"/>
</dbReference>
<dbReference type="GO" id="GO:0001227">
    <property type="term" value="F:DNA-binding transcription repressor activity, RNA polymerase II-specific"/>
    <property type="evidence" value="ECO:0007669"/>
    <property type="project" value="TreeGrafter"/>
</dbReference>
<dbReference type="GO" id="GO:0051525">
    <property type="term" value="F:NFAT protein binding"/>
    <property type="evidence" value="ECO:0000250"/>
    <property type="project" value="UniProtKB"/>
</dbReference>
<dbReference type="GO" id="GO:0042803">
    <property type="term" value="F:protein homodimerization activity"/>
    <property type="evidence" value="ECO:0000250"/>
    <property type="project" value="UniProtKB"/>
</dbReference>
<dbReference type="GO" id="GO:0004674">
    <property type="term" value="F:protein serine/threonine kinase activity"/>
    <property type="evidence" value="ECO:0000314"/>
    <property type="project" value="UniProtKB"/>
</dbReference>
<dbReference type="GO" id="GO:0000978">
    <property type="term" value="F:RNA polymerase II cis-regulatory region sequence-specific DNA binding"/>
    <property type="evidence" value="ECO:0000250"/>
    <property type="project" value="UniProtKB"/>
</dbReference>
<dbReference type="GO" id="GO:0043565">
    <property type="term" value="F:sequence-specific DNA binding"/>
    <property type="evidence" value="ECO:0000250"/>
    <property type="project" value="UniProtKB"/>
</dbReference>
<dbReference type="GO" id="GO:0008270">
    <property type="term" value="F:zinc ion binding"/>
    <property type="evidence" value="ECO:0007669"/>
    <property type="project" value="UniProtKB-KW"/>
</dbReference>
<dbReference type="GO" id="GO:0008285">
    <property type="term" value="P:negative regulation of cell population proliferation"/>
    <property type="evidence" value="ECO:0000250"/>
    <property type="project" value="UniProtKB"/>
</dbReference>
<dbReference type="GO" id="GO:0032792">
    <property type="term" value="P:negative regulation of CREB transcription factor activity"/>
    <property type="evidence" value="ECO:0000250"/>
    <property type="project" value="UniProtKB"/>
</dbReference>
<dbReference type="GO" id="GO:0001818">
    <property type="term" value="P:negative regulation of cytokine production"/>
    <property type="evidence" value="ECO:0000250"/>
    <property type="project" value="UniProtKB"/>
</dbReference>
<dbReference type="GO" id="GO:0043433">
    <property type="term" value="P:negative regulation of DNA-binding transcription factor activity"/>
    <property type="evidence" value="ECO:0000250"/>
    <property type="project" value="UniProtKB"/>
</dbReference>
<dbReference type="GO" id="GO:0045892">
    <property type="term" value="P:negative regulation of DNA-templated transcription"/>
    <property type="evidence" value="ECO:0000250"/>
    <property type="project" value="UniProtKB"/>
</dbReference>
<dbReference type="GO" id="GO:0050777">
    <property type="term" value="P:negative regulation of immune response"/>
    <property type="evidence" value="ECO:0000250"/>
    <property type="project" value="UniProtKB"/>
</dbReference>
<dbReference type="GO" id="GO:0032693">
    <property type="term" value="P:negative regulation of interleukin-10 production"/>
    <property type="evidence" value="ECO:0000250"/>
    <property type="project" value="UniProtKB"/>
</dbReference>
<dbReference type="GO" id="GO:0032703">
    <property type="term" value="P:negative regulation of interleukin-2 production"/>
    <property type="evidence" value="ECO:0000250"/>
    <property type="project" value="UniProtKB"/>
</dbReference>
<dbReference type="GO" id="GO:0032713">
    <property type="term" value="P:negative regulation of interleukin-4 production"/>
    <property type="evidence" value="ECO:0000250"/>
    <property type="project" value="UniProtKB"/>
</dbReference>
<dbReference type="GO" id="GO:0032088">
    <property type="term" value="P:negative regulation of NF-kappaB transcription factor activity"/>
    <property type="evidence" value="ECO:0000250"/>
    <property type="project" value="UniProtKB"/>
</dbReference>
<dbReference type="GO" id="GO:0002725">
    <property type="term" value="P:negative regulation of T cell cytokine production"/>
    <property type="evidence" value="ECO:0000250"/>
    <property type="project" value="UniProtKB"/>
</dbReference>
<dbReference type="GO" id="GO:0042130">
    <property type="term" value="P:negative regulation of T cell proliferation"/>
    <property type="evidence" value="ECO:0000250"/>
    <property type="project" value="UniProtKB"/>
</dbReference>
<dbReference type="GO" id="GO:2000320">
    <property type="term" value="P:negative regulation of T-helper 17 cell differentiation"/>
    <property type="evidence" value="ECO:0000250"/>
    <property type="project" value="UniProtKB"/>
</dbReference>
<dbReference type="GO" id="GO:0032689">
    <property type="term" value="P:negative regulation of type II interferon production"/>
    <property type="evidence" value="ECO:0000250"/>
    <property type="project" value="UniProtKB"/>
</dbReference>
<dbReference type="GO" id="GO:0045893">
    <property type="term" value="P:positive regulation of DNA-templated transcription"/>
    <property type="evidence" value="ECO:0000250"/>
    <property type="project" value="UniProtKB"/>
</dbReference>
<dbReference type="GO" id="GO:0045591">
    <property type="term" value="P:positive regulation of regulatory T cell differentiation"/>
    <property type="evidence" value="ECO:0000250"/>
    <property type="project" value="UniProtKB"/>
</dbReference>
<dbReference type="GO" id="GO:0002667">
    <property type="term" value="P:regulation of T cell anergy"/>
    <property type="evidence" value="ECO:0000250"/>
    <property type="project" value="UniProtKB"/>
</dbReference>
<dbReference type="GO" id="GO:0042110">
    <property type="term" value="P:T cell activation"/>
    <property type="evidence" value="ECO:0000250"/>
    <property type="project" value="UniProtKB"/>
</dbReference>
<dbReference type="CDD" id="cd20066">
    <property type="entry name" value="FH_FOXP3"/>
    <property type="match status" value="1"/>
</dbReference>
<dbReference type="FunFam" id="1.10.10.10:FF:000010">
    <property type="entry name" value="Forkhead box P2 isoform B"/>
    <property type="match status" value="1"/>
</dbReference>
<dbReference type="FunFam" id="1.20.5.340:FF:000024">
    <property type="entry name" value="Forkhead box P3, isoform CRA_b"/>
    <property type="match status" value="1"/>
</dbReference>
<dbReference type="Gene3D" id="1.20.5.340">
    <property type="match status" value="1"/>
</dbReference>
<dbReference type="Gene3D" id="1.10.10.10">
    <property type="entry name" value="Winged helix-like DNA-binding domain superfamily/Winged helix DNA-binding domain"/>
    <property type="match status" value="1"/>
</dbReference>
<dbReference type="InterPro" id="IPR047413">
    <property type="entry name" value="FH_FOXP3"/>
</dbReference>
<dbReference type="InterPro" id="IPR001766">
    <property type="entry name" value="Fork_head_dom"/>
</dbReference>
<dbReference type="InterPro" id="IPR050998">
    <property type="entry name" value="FOXP"/>
</dbReference>
<dbReference type="InterPro" id="IPR032354">
    <property type="entry name" value="FOXP-CC"/>
</dbReference>
<dbReference type="InterPro" id="IPR030456">
    <property type="entry name" value="TF_fork_head_CS_2"/>
</dbReference>
<dbReference type="InterPro" id="IPR036388">
    <property type="entry name" value="WH-like_DNA-bd_sf"/>
</dbReference>
<dbReference type="InterPro" id="IPR036390">
    <property type="entry name" value="WH_DNA-bd_sf"/>
</dbReference>
<dbReference type="InterPro" id="IPR013087">
    <property type="entry name" value="Znf_C2H2_type"/>
</dbReference>
<dbReference type="PANTHER" id="PTHR45796">
    <property type="entry name" value="FORKHEAD BOX P, ISOFORM C"/>
    <property type="match status" value="1"/>
</dbReference>
<dbReference type="PANTHER" id="PTHR45796:SF5">
    <property type="entry name" value="FORKHEAD BOX PROTEIN P3"/>
    <property type="match status" value="1"/>
</dbReference>
<dbReference type="Pfam" id="PF00250">
    <property type="entry name" value="Forkhead"/>
    <property type="match status" value="1"/>
</dbReference>
<dbReference type="Pfam" id="PF16159">
    <property type="entry name" value="FOXP-CC"/>
    <property type="match status" value="1"/>
</dbReference>
<dbReference type="PRINTS" id="PR00053">
    <property type="entry name" value="FORKHEAD"/>
</dbReference>
<dbReference type="SMART" id="SM00339">
    <property type="entry name" value="FH"/>
    <property type="match status" value="1"/>
</dbReference>
<dbReference type="SUPFAM" id="SSF46785">
    <property type="entry name" value="Winged helix' DNA-binding domain"/>
    <property type="match status" value="1"/>
</dbReference>
<dbReference type="PROSITE" id="PS00658">
    <property type="entry name" value="FORK_HEAD_2"/>
    <property type="match status" value="1"/>
</dbReference>
<dbReference type="PROSITE" id="PS50039">
    <property type="entry name" value="FORK_HEAD_3"/>
    <property type="match status" value="1"/>
</dbReference>
<dbReference type="PROSITE" id="PS00028">
    <property type="entry name" value="ZINC_FINGER_C2H2_1"/>
    <property type="match status" value="1"/>
</dbReference>
<protein>
    <recommendedName>
        <fullName>Forkhead box protein P3</fullName>
    </recommendedName>
    <component>
        <recommendedName>
            <fullName>Forkhead box protein P3, C-terminally processed</fullName>
        </recommendedName>
    </component>
    <component>
        <recommendedName>
            <fullName>Forkhead box protein P3 41 kDa form</fullName>
        </recommendedName>
    </component>
</protein>
<proteinExistence type="evidence at transcript level"/>
<reference key="1">
    <citation type="submission" date="2003-08" db="EMBL/GenBank/DDBJ databases">
        <title>Transduction of macaque lymphocytes by Foxp3: in vitro functional studies.</title>
        <authorList>
            <person name="Apoil P.-A."/>
            <person name="Tiraby G."/>
            <person name="Blancher A."/>
        </authorList>
    </citation>
    <scope>NUCLEOTIDE SEQUENCE [MRNA]</scope>
</reference>